<feature type="chain" id="PRO_0000302300" description="Large ribosomal subunit protein bL36">
    <location>
        <begin position="1"/>
        <end position="41"/>
    </location>
</feature>
<proteinExistence type="inferred from homology"/>
<keyword id="KW-1185">Reference proteome</keyword>
<keyword id="KW-0687">Ribonucleoprotein</keyword>
<keyword id="KW-0689">Ribosomal protein</keyword>
<organism>
    <name type="scientific">Ruegeria sp. (strain TM1040)</name>
    <name type="common">Silicibacter sp.</name>
    <dbReference type="NCBI Taxonomy" id="292414"/>
    <lineage>
        <taxon>Bacteria</taxon>
        <taxon>Pseudomonadati</taxon>
        <taxon>Pseudomonadota</taxon>
        <taxon>Alphaproteobacteria</taxon>
        <taxon>Rhodobacterales</taxon>
        <taxon>Roseobacteraceae</taxon>
        <taxon>Ruegeria</taxon>
    </lineage>
</organism>
<comment type="similarity">
    <text evidence="1">Belongs to the bacterial ribosomal protein bL36 family.</text>
</comment>
<protein>
    <recommendedName>
        <fullName evidence="1">Large ribosomal subunit protein bL36</fullName>
    </recommendedName>
    <alternativeName>
        <fullName evidence="2">50S ribosomal protein L36</fullName>
    </alternativeName>
</protein>
<reference key="1">
    <citation type="submission" date="2006-05" db="EMBL/GenBank/DDBJ databases">
        <title>Complete sequence of chromosome of Silicibacter sp. TM1040.</title>
        <authorList>
            <consortium name="US DOE Joint Genome Institute"/>
            <person name="Copeland A."/>
            <person name="Lucas S."/>
            <person name="Lapidus A."/>
            <person name="Barry K."/>
            <person name="Detter J.C."/>
            <person name="Glavina del Rio T."/>
            <person name="Hammon N."/>
            <person name="Israni S."/>
            <person name="Dalin E."/>
            <person name="Tice H."/>
            <person name="Pitluck S."/>
            <person name="Brettin T."/>
            <person name="Bruce D."/>
            <person name="Han C."/>
            <person name="Tapia R."/>
            <person name="Goodwin L."/>
            <person name="Thompson L.S."/>
            <person name="Gilna P."/>
            <person name="Schmutz J."/>
            <person name="Larimer F."/>
            <person name="Land M."/>
            <person name="Hauser L."/>
            <person name="Kyrpides N."/>
            <person name="Kim E."/>
            <person name="Belas R."/>
            <person name="Moran M.A."/>
            <person name="Buchan A."/>
            <person name="Gonzalez J.M."/>
            <person name="Schell M.A."/>
            <person name="Sun F."/>
            <person name="Richardson P."/>
        </authorList>
    </citation>
    <scope>NUCLEOTIDE SEQUENCE [LARGE SCALE GENOMIC DNA]</scope>
    <source>
        <strain>TM1040</strain>
    </source>
</reference>
<accession>Q1GKF8</accession>
<dbReference type="EMBL" id="CP000377">
    <property type="protein sequence ID" value="ABF62858.1"/>
    <property type="molecule type" value="Genomic_DNA"/>
</dbReference>
<dbReference type="SMR" id="Q1GKF8"/>
<dbReference type="STRING" id="292414.TM1040_0125"/>
<dbReference type="KEGG" id="sit:TM1040_0125"/>
<dbReference type="eggNOG" id="COG0257">
    <property type="taxonomic scope" value="Bacteria"/>
</dbReference>
<dbReference type="HOGENOM" id="CLU_135723_3_2_5"/>
<dbReference type="OrthoDB" id="9801558at2"/>
<dbReference type="Proteomes" id="UP000000636">
    <property type="component" value="Chromosome"/>
</dbReference>
<dbReference type="GO" id="GO:1990904">
    <property type="term" value="C:ribonucleoprotein complex"/>
    <property type="evidence" value="ECO:0007669"/>
    <property type="project" value="UniProtKB-KW"/>
</dbReference>
<dbReference type="GO" id="GO:0005840">
    <property type="term" value="C:ribosome"/>
    <property type="evidence" value="ECO:0007669"/>
    <property type="project" value="UniProtKB-KW"/>
</dbReference>
<dbReference type="GO" id="GO:0003735">
    <property type="term" value="F:structural constituent of ribosome"/>
    <property type="evidence" value="ECO:0007669"/>
    <property type="project" value="InterPro"/>
</dbReference>
<dbReference type="GO" id="GO:0006412">
    <property type="term" value="P:translation"/>
    <property type="evidence" value="ECO:0007669"/>
    <property type="project" value="UniProtKB-UniRule"/>
</dbReference>
<dbReference type="HAMAP" id="MF_00251">
    <property type="entry name" value="Ribosomal_bL36"/>
    <property type="match status" value="1"/>
</dbReference>
<dbReference type="InterPro" id="IPR000473">
    <property type="entry name" value="Ribosomal_bL36"/>
</dbReference>
<dbReference type="InterPro" id="IPR035977">
    <property type="entry name" value="Ribosomal_bL36_sp"/>
</dbReference>
<dbReference type="InterPro" id="IPR047621">
    <property type="entry name" value="Ribosomal_L36_bact"/>
</dbReference>
<dbReference type="NCBIfam" id="NF002021">
    <property type="entry name" value="PRK00831.1"/>
    <property type="match status" value="1"/>
</dbReference>
<dbReference type="NCBIfam" id="TIGR01022">
    <property type="entry name" value="rpmJ_bact"/>
    <property type="match status" value="1"/>
</dbReference>
<dbReference type="PANTHER" id="PTHR47781">
    <property type="entry name" value="50S RIBOSOMAL PROTEIN L36 2"/>
    <property type="match status" value="1"/>
</dbReference>
<dbReference type="PANTHER" id="PTHR47781:SF1">
    <property type="entry name" value="LARGE RIBOSOMAL SUBUNIT PROTEIN BL36B"/>
    <property type="match status" value="1"/>
</dbReference>
<dbReference type="Pfam" id="PF00444">
    <property type="entry name" value="Ribosomal_L36"/>
    <property type="match status" value="1"/>
</dbReference>
<dbReference type="SUPFAM" id="SSF57840">
    <property type="entry name" value="Ribosomal protein L36"/>
    <property type="match status" value="1"/>
</dbReference>
<dbReference type="PROSITE" id="PS00828">
    <property type="entry name" value="RIBOSOMAL_L36"/>
    <property type="match status" value="1"/>
</dbReference>
<gene>
    <name evidence="1" type="primary">rpmJ</name>
    <name type="ordered locus">TM1040_0125</name>
</gene>
<name>RL36_RUEST</name>
<evidence type="ECO:0000255" key="1">
    <source>
        <dbReference type="HAMAP-Rule" id="MF_00251"/>
    </source>
</evidence>
<evidence type="ECO:0000305" key="2"/>
<sequence length="41" mass="5012">MKVKNSLRSLKNRHRDCRVVRRKGRVYVINKTQRKFKARQG</sequence>